<dbReference type="EC" id="2.4.2.-" evidence="1"/>
<dbReference type="EC" id="2.4.2.22" evidence="1"/>
<dbReference type="EMBL" id="X63336">
    <property type="protein sequence ID" value="CAA44936.1"/>
    <property type="molecule type" value="Genomic_DNA"/>
</dbReference>
<dbReference type="EMBL" id="U28239">
    <property type="protein sequence ID" value="AAC01774.1"/>
    <property type="molecule type" value="Genomic_DNA"/>
</dbReference>
<dbReference type="EMBL" id="AE006468">
    <property type="protein sequence ID" value="AAL19273.1"/>
    <property type="molecule type" value="Genomic_DNA"/>
</dbReference>
<dbReference type="PIR" id="S18888">
    <property type="entry name" value="S18888"/>
</dbReference>
<dbReference type="RefSeq" id="NP_459314.1">
    <property type="nucleotide sequence ID" value="NC_003197.2"/>
</dbReference>
<dbReference type="RefSeq" id="WP_001292018.1">
    <property type="nucleotide sequence ID" value="NC_003197.2"/>
</dbReference>
<dbReference type="SMR" id="P0A277"/>
<dbReference type="STRING" id="99287.STM0317"/>
<dbReference type="PaxDb" id="99287-STM0317"/>
<dbReference type="GeneID" id="1251836"/>
<dbReference type="GeneID" id="66754798"/>
<dbReference type="KEGG" id="stm:STM0317"/>
<dbReference type="PATRIC" id="fig|99287.12.peg.337"/>
<dbReference type="HOGENOM" id="CLU_080904_3_0_6"/>
<dbReference type="OMA" id="FHRDCRA"/>
<dbReference type="PhylomeDB" id="P0A277"/>
<dbReference type="BioCyc" id="SENT99287:STM0317-MONOMER"/>
<dbReference type="UniPathway" id="UPA00602">
    <property type="reaction ID" value="UER00658"/>
</dbReference>
<dbReference type="UniPathway" id="UPA00909">
    <property type="reaction ID" value="UER00887"/>
</dbReference>
<dbReference type="Proteomes" id="UP000001014">
    <property type="component" value="Chromosome"/>
</dbReference>
<dbReference type="GO" id="GO:0005829">
    <property type="term" value="C:cytosol"/>
    <property type="evidence" value="ECO:0000318"/>
    <property type="project" value="GO_Central"/>
</dbReference>
<dbReference type="GO" id="GO:0005886">
    <property type="term" value="C:plasma membrane"/>
    <property type="evidence" value="ECO:0007669"/>
    <property type="project" value="UniProtKB-SubCell"/>
</dbReference>
<dbReference type="GO" id="GO:0052657">
    <property type="term" value="F:guanine phosphoribosyltransferase activity"/>
    <property type="evidence" value="ECO:0007669"/>
    <property type="project" value="RHEA"/>
</dbReference>
<dbReference type="GO" id="GO:0004422">
    <property type="term" value="F:hypoxanthine phosphoribosyltransferase activity"/>
    <property type="evidence" value="ECO:0000318"/>
    <property type="project" value="GO_Central"/>
</dbReference>
<dbReference type="GO" id="GO:0000287">
    <property type="term" value="F:magnesium ion binding"/>
    <property type="evidence" value="ECO:0007669"/>
    <property type="project" value="UniProtKB-UniRule"/>
</dbReference>
<dbReference type="GO" id="GO:0000310">
    <property type="term" value="F:xanthine phosphoribosyltransferase activity"/>
    <property type="evidence" value="ECO:0000318"/>
    <property type="project" value="GO_Central"/>
</dbReference>
<dbReference type="GO" id="GO:0032263">
    <property type="term" value="P:GMP salvage"/>
    <property type="evidence" value="ECO:0000318"/>
    <property type="project" value="GO_Central"/>
</dbReference>
<dbReference type="GO" id="GO:0032264">
    <property type="term" value="P:IMP salvage"/>
    <property type="evidence" value="ECO:0000318"/>
    <property type="project" value="GO_Central"/>
</dbReference>
<dbReference type="GO" id="GO:0006166">
    <property type="term" value="P:purine ribonucleoside salvage"/>
    <property type="evidence" value="ECO:0007669"/>
    <property type="project" value="UniProtKB-KW"/>
</dbReference>
<dbReference type="GO" id="GO:0032265">
    <property type="term" value="P:XMP salvage"/>
    <property type="evidence" value="ECO:0000318"/>
    <property type="project" value="GO_Central"/>
</dbReference>
<dbReference type="CDD" id="cd06223">
    <property type="entry name" value="PRTases_typeI"/>
    <property type="match status" value="1"/>
</dbReference>
<dbReference type="FunFam" id="3.40.50.2020:FF:000009">
    <property type="entry name" value="Xanthine phosphoribosyltransferase"/>
    <property type="match status" value="1"/>
</dbReference>
<dbReference type="Gene3D" id="3.40.50.2020">
    <property type="match status" value="1"/>
</dbReference>
<dbReference type="HAMAP" id="MF_01903">
    <property type="entry name" value="XGPRT"/>
    <property type="match status" value="1"/>
</dbReference>
<dbReference type="InterPro" id="IPR000836">
    <property type="entry name" value="PRibTrfase_dom"/>
</dbReference>
<dbReference type="InterPro" id="IPR029057">
    <property type="entry name" value="PRTase-like"/>
</dbReference>
<dbReference type="InterPro" id="IPR023747">
    <property type="entry name" value="Xanthine_Guanine_PRibTrfase"/>
</dbReference>
<dbReference type="NCBIfam" id="NF006613">
    <property type="entry name" value="PRK09177.1"/>
    <property type="match status" value="1"/>
</dbReference>
<dbReference type="PANTHER" id="PTHR39563">
    <property type="entry name" value="XANTHINE PHOSPHORIBOSYLTRANSFERASE"/>
    <property type="match status" value="1"/>
</dbReference>
<dbReference type="PANTHER" id="PTHR39563:SF1">
    <property type="entry name" value="XANTHINE-GUANINE PHOSPHORIBOSYLTRANSFERASE"/>
    <property type="match status" value="1"/>
</dbReference>
<dbReference type="Pfam" id="PF00156">
    <property type="entry name" value="Pribosyltran"/>
    <property type="match status" value="1"/>
</dbReference>
<dbReference type="SUPFAM" id="SSF53271">
    <property type="entry name" value="PRTase-like"/>
    <property type="match status" value="1"/>
</dbReference>
<dbReference type="PROSITE" id="PS00103">
    <property type="entry name" value="PUR_PYR_PR_TRANSFER"/>
    <property type="match status" value="1"/>
</dbReference>
<accession>P0A277</accession>
<accession>P26972</accession>
<comment type="function">
    <text>Acts on guanine, xanthine and to a lesser extent hypoxanthine.</text>
</comment>
<comment type="function">
    <text evidence="1">Purine salvage pathway enzyme that catalyzes the transfer of the ribosyl-5-phosphate group from 5-phospho-alpha-D-ribose 1-diphosphate (PRPP) to the N9 position of the 6-oxopurines guanine and xanthine to form the corresponding ribonucleotides GMP (guanosine 5'-monophosphate) and XMP (xanthosine 5'-monophosphate), with the release of PPi. To a lesser extent, also acts on hypoxanthine.</text>
</comment>
<comment type="catalytic activity">
    <reaction evidence="1">
        <text>GMP + diphosphate = guanine + 5-phospho-alpha-D-ribose 1-diphosphate</text>
        <dbReference type="Rhea" id="RHEA:25424"/>
        <dbReference type="ChEBI" id="CHEBI:16235"/>
        <dbReference type="ChEBI" id="CHEBI:33019"/>
        <dbReference type="ChEBI" id="CHEBI:58017"/>
        <dbReference type="ChEBI" id="CHEBI:58115"/>
    </reaction>
    <physiologicalReaction direction="right-to-left" evidence="1">
        <dbReference type="Rhea" id="RHEA:25426"/>
    </physiologicalReaction>
</comment>
<comment type="catalytic activity">
    <reaction evidence="1">
        <text>XMP + diphosphate = xanthine + 5-phospho-alpha-D-ribose 1-diphosphate</text>
        <dbReference type="Rhea" id="RHEA:10800"/>
        <dbReference type="ChEBI" id="CHEBI:17712"/>
        <dbReference type="ChEBI" id="CHEBI:33019"/>
        <dbReference type="ChEBI" id="CHEBI:57464"/>
        <dbReference type="ChEBI" id="CHEBI:58017"/>
        <dbReference type="EC" id="2.4.2.22"/>
    </reaction>
    <physiologicalReaction direction="right-to-left" evidence="1">
        <dbReference type="Rhea" id="RHEA:10802"/>
    </physiologicalReaction>
</comment>
<comment type="catalytic activity">
    <reaction evidence="1">
        <text>IMP + diphosphate = hypoxanthine + 5-phospho-alpha-D-ribose 1-diphosphate</text>
        <dbReference type="Rhea" id="RHEA:17973"/>
        <dbReference type="ChEBI" id="CHEBI:17368"/>
        <dbReference type="ChEBI" id="CHEBI:33019"/>
        <dbReference type="ChEBI" id="CHEBI:58017"/>
        <dbReference type="ChEBI" id="CHEBI:58053"/>
    </reaction>
    <physiologicalReaction direction="right-to-left" evidence="1">
        <dbReference type="Rhea" id="RHEA:17975"/>
    </physiologicalReaction>
</comment>
<comment type="cofactor">
    <cofactor evidence="1">
        <name>Mg(2+)</name>
        <dbReference type="ChEBI" id="CHEBI:18420"/>
    </cofactor>
</comment>
<comment type="pathway">
    <text evidence="1">Purine metabolism; GMP biosynthesis via salvage pathway; GMP from guanine: step 1/1.</text>
</comment>
<comment type="pathway">
    <text evidence="1">Purine metabolism; XMP biosynthesis via salvage pathway; XMP from xanthine: step 1/1.</text>
</comment>
<comment type="subunit">
    <text evidence="1">Homotetramer.</text>
</comment>
<comment type="subcellular location">
    <subcellularLocation>
        <location evidence="1">Cell inner membrane</location>
        <topology evidence="1">Peripheral membrane protein</topology>
    </subcellularLocation>
</comment>
<comment type="similarity">
    <text evidence="1">Belongs to the purine/pyrimidine phosphoribosyltransferase family. XGPT subfamily.</text>
</comment>
<evidence type="ECO:0000255" key="1">
    <source>
        <dbReference type="HAMAP-Rule" id="MF_01903"/>
    </source>
</evidence>
<name>XGPT_SALTY</name>
<proteinExistence type="inferred from homology"/>
<gene>
    <name evidence="1" type="primary">gpt</name>
    <name type="ordered locus">STM0317</name>
</gene>
<reference key="1">
    <citation type="submission" date="1991-11" db="EMBL/GenBank/DDBJ databases">
        <authorList>
            <person name="Bryant D.W."/>
            <person name="Rossetto F.E."/>
            <person name="O'Reilly C."/>
            <person name="Nieboer E."/>
            <person name="Turnbull J."/>
        </authorList>
    </citation>
    <scope>NUCLEOTIDE SEQUENCE [GENOMIC DNA]</scope>
    <source>
        <strain>LT2</strain>
    </source>
</reference>
<reference key="2">
    <citation type="journal article" date="1996" name="Mutagenesis">
        <title>Regionally-targeted mutagenesis by metabolically-activated steviol: DNA sequence analysis of steviol-induced mutants of guanine phosphoribosyltransferase (gpt) gene of Salmonella typhimurium TM677.</title>
        <authorList>
            <person name="Matsui M."/>
            <person name="Sofuni T."/>
            <person name="Nohmi T."/>
        </authorList>
    </citation>
    <scope>NUCLEOTIDE SEQUENCE [GENOMIC DNA]</scope>
    <source>
        <strain>ATCC 29631 / TA 1538</strain>
    </source>
</reference>
<reference key="3">
    <citation type="journal article" date="2001" name="Nature">
        <title>Complete genome sequence of Salmonella enterica serovar Typhimurium LT2.</title>
        <authorList>
            <person name="McClelland M."/>
            <person name="Sanderson K.E."/>
            <person name="Spieth J."/>
            <person name="Clifton S.W."/>
            <person name="Latreille P."/>
            <person name="Courtney L."/>
            <person name="Porwollik S."/>
            <person name="Ali J."/>
            <person name="Dante M."/>
            <person name="Du F."/>
            <person name="Hou S."/>
            <person name="Layman D."/>
            <person name="Leonard S."/>
            <person name="Nguyen C."/>
            <person name="Scott K."/>
            <person name="Holmes A."/>
            <person name="Grewal N."/>
            <person name="Mulvaney E."/>
            <person name="Ryan E."/>
            <person name="Sun H."/>
            <person name="Florea L."/>
            <person name="Miller W."/>
            <person name="Stoneking T."/>
            <person name="Nhan M."/>
            <person name="Waterston R."/>
            <person name="Wilson R.K."/>
        </authorList>
    </citation>
    <scope>NUCLEOTIDE SEQUENCE [LARGE SCALE GENOMIC DNA]</scope>
    <source>
        <strain>LT2 / SGSC1412 / ATCC 700720</strain>
    </source>
</reference>
<organism>
    <name type="scientific">Salmonella typhimurium (strain LT2 / SGSC1412 / ATCC 700720)</name>
    <dbReference type="NCBI Taxonomy" id="99287"/>
    <lineage>
        <taxon>Bacteria</taxon>
        <taxon>Pseudomonadati</taxon>
        <taxon>Pseudomonadota</taxon>
        <taxon>Gammaproteobacteria</taxon>
        <taxon>Enterobacterales</taxon>
        <taxon>Enterobacteriaceae</taxon>
        <taxon>Salmonella</taxon>
    </lineage>
</organism>
<keyword id="KW-0997">Cell inner membrane</keyword>
<keyword id="KW-1003">Cell membrane</keyword>
<keyword id="KW-0328">Glycosyltransferase</keyword>
<keyword id="KW-0460">Magnesium</keyword>
<keyword id="KW-0472">Membrane</keyword>
<keyword id="KW-0479">Metal-binding</keyword>
<keyword id="KW-0660">Purine salvage</keyword>
<keyword id="KW-1185">Reference proteome</keyword>
<keyword id="KW-0808">Transferase</keyword>
<protein>
    <recommendedName>
        <fullName evidence="1">Xanthine-guanine phosphoribosyltransferase</fullName>
        <shortName evidence="1">XGPRT</shortName>
        <ecNumber evidence="1">2.4.2.-</ecNumber>
        <ecNumber evidence="1">2.4.2.22</ecNumber>
    </recommendedName>
    <alternativeName>
        <fullName evidence="1">Xanthine phosphoribosyltransferase</fullName>
    </alternativeName>
</protein>
<sequence>MSEKYVVTWDMLQIHARKLASRLMPSEQWKGIIAVSRGGLVPGALLARELGIRHVDTVCISSYDHDNQRELKVLKRAEGDGEGFIVIDDLVDTGGTAVAIREMYPKAHFVTIFAKPAGRPLVDDYVIDIPQNTWIEQPWDMGVVFVPPISGR</sequence>
<feature type="chain" id="PRO_0000139686" description="Xanthine-guanine phosphoribosyltransferase">
    <location>
        <begin position="1"/>
        <end position="152"/>
    </location>
</feature>
<feature type="binding site" evidence="1">
    <location>
        <begin position="37"/>
        <end position="38"/>
    </location>
    <ligand>
        <name>5-phospho-alpha-D-ribose 1-diphosphate</name>
        <dbReference type="ChEBI" id="CHEBI:58017"/>
    </ligand>
</feature>
<feature type="binding site" evidence="1">
    <location>
        <position position="69"/>
    </location>
    <ligand>
        <name>5-phospho-alpha-D-ribose 1-diphosphate</name>
        <dbReference type="ChEBI" id="CHEBI:58017"/>
    </ligand>
</feature>
<feature type="binding site" evidence="1">
    <location>
        <position position="69"/>
    </location>
    <ligand>
        <name>GMP</name>
        <dbReference type="ChEBI" id="CHEBI:58115"/>
    </ligand>
</feature>
<feature type="binding site" evidence="1">
    <location>
        <begin position="88"/>
        <end position="96"/>
    </location>
    <ligand>
        <name>5-phospho-alpha-D-ribose 1-diphosphate</name>
        <dbReference type="ChEBI" id="CHEBI:58017"/>
    </ligand>
</feature>
<feature type="binding site" evidence="1">
    <location>
        <position position="89"/>
    </location>
    <ligand>
        <name>Mg(2+)</name>
        <dbReference type="ChEBI" id="CHEBI:18420"/>
    </ligand>
</feature>
<feature type="binding site" evidence="1">
    <location>
        <begin position="92"/>
        <end position="96"/>
    </location>
    <ligand>
        <name>GMP</name>
        <dbReference type="ChEBI" id="CHEBI:58115"/>
    </ligand>
</feature>
<feature type="binding site" evidence="1">
    <location>
        <position position="92"/>
    </location>
    <ligand>
        <name>guanine</name>
        <dbReference type="ChEBI" id="CHEBI:16235"/>
    </ligand>
</feature>
<feature type="binding site" evidence="1">
    <location>
        <position position="92"/>
    </location>
    <ligand>
        <name>xanthine</name>
        <dbReference type="ChEBI" id="CHEBI:17712"/>
    </ligand>
</feature>
<feature type="binding site" evidence="1">
    <location>
        <begin position="134"/>
        <end position="135"/>
    </location>
    <ligand>
        <name>GMP</name>
        <dbReference type="ChEBI" id="CHEBI:58115"/>
    </ligand>
</feature>
<feature type="binding site" evidence="1">
    <location>
        <position position="135"/>
    </location>
    <ligand>
        <name>guanine</name>
        <dbReference type="ChEBI" id="CHEBI:16235"/>
    </ligand>
</feature>
<feature type="binding site" evidence="1">
    <location>
        <position position="135"/>
    </location>
    <ligand>
        <name>xanthine</name>
        <dbReference type="ChEBI" id="CHEBI:17712"/>
    </ligand>
</feature>